<protein>
    <recommendedName>
        <fullName evidence="2">F-box/SPRY domain-containing protein 1</fullName>
    </recommendedName>
</protein>
<sequence length="255" mass="28887">MVDPVAALCNYNVLEVIFSYLELEDLNHCSQVCKSWYHFLNDENSDVWRWHCLNKLPKEALKSDLLASVSTYKTKLRAYFHAWSPNDCSRNVYIKPNGFTLHRNPVAQSTDAARSKIGFRHGRHTWEVIWEGPLGTVAVIGISTKEAALQCHGYVALLGSDDQSWGWNLVENHLLHNGDMQGSYPLLNNAPKYQVGERIRVILDCEDNTLSFEKNYEFLGVAFRGLPDKKLYPTVSAVYGNTEVSMVYLGTPLDG</sequence>
<organism>
    <name type="scientific">Drosophila yakuba</name>
    <name type="common">Fruit fly</name>
    <dbReference type="NCBI Taxonomy" id="7245"/>
    <lineage>
        <taxon>Eukaryota</taxon>
        <taxon>Metazoa</taxon>
        <taxon>Ecdysozoa</taxon>
        <taxon>Arthropoda</taxon>
        <taxon>Hexapoda</taxon>
        <taxon>Insecta</taxon>
        <taxon>Pterygota</taxon>
        <taxon>Neoptera</taxon>
        <taxon>Endopterygota</taxon>
        <taxon>Diptera</taxon>
        <taxon>Brachycera</taxon>
        <taxon>Muscomorpha</taxon>
        <taxon>Ephydroidea</taxon>
        <taxon>Drosophilidae</taxon>
        <taxon>Drosophila</taxon>
        <taxon>Sophophora</taxon>
    </lineage>
</organism>
<gene>
    <name evidence="2" type="primary">Fsn</name>
    <name type="ORF">GE13381</name>
</gene>
<feature type="chain" id="PRO_0000383320" description="F-box/SPRY domain-containing protein 1">
    <location>
        <begin position="1"/>
        <end position="255"/>
    </location>
</feature>
<feature type="domain" description="F-box" evidence="3">
    <location>
        <begin position="3"/>
        <end position="51"/>
    </location>
</feature>
<feature type="domain" description="B30.2/SPRY" evidence="4">
    <location>
        <begin position="61"/>
        <end position="253"/>
    </location>
</feature>
<comment type="function">
    <text evidence="1">Required in the presynaptic motoneuron to down-regulate the levels of wnd and restrain synaptic terminal growth at the neuromuscular junction (NMJ).</text>
</comment>
<comment type="pathway">
    <text evidence="2">Protein modification; protein ubiquitination.</text>
</comment>
<comment type="subunit">
    <text evidence="2">Component of an E3 ubiquitin ligase complex composed of hiw and Fsn.</text>
</comment>
<comment type="subcellular location">
    <subcellularLocation>
        <location evidence="2">Synapse</location>
    </subcellularLocation>
</comment>
<comment type="similarity">
    <text evidence="5">Belongs to the FBXO45/Fsn family.</text>
</comment>
<keyword id="KW-0524">Neurogenesis</keyword>
<keyword id="KW-0770">Synapse</keyword>
<keyword id="KW-0833">Ubl conjugation pathway</keyword>
<dbReference type="EMBL" id="CM000158">
    <property type="protein sequence ID" value="EDW90647.1"/>
    <property type="molecule type" value="Genomic_DNA"/>
</dbReference>
<dbReference type="SMR" id="B4P4K8"/>
<dbReference type="EnsemblMetazoa" id="FBtr0259899">
    <property type="protein sequence ID" value="FBpp0258391"/>
    <property type="gene ID" value="FBgn0231060"/>
</dbReference>
<dbReference type="EnsemblMetazoa" id="XM_002090899.4">
    <property type="protein sequence ID" value="XP_002090935.1"/>
    <property type="gene ID" value="LOC6529989"/>
</dbReference>
<dbReference type="GeneID" id="6529989"/>
<dbReference type="KEGG" id="dya:Dyak_GE13381"/>
<dbReference type="CTD" id="36460"/>
<dbReference type="eggNOG" id="KOG3953">
    <property type="taxonomic scope" value="Eukaryota"/>
</dbReference>
<dbReference type="HOGENOM" id="CLU_046756_1_0_1"/>
<dbReference type="OMA" id="ATKRASM"/>
<dbReference type="OrthoDB" id="2398163at2759"/>
<dbReference type="PhylomeDB" id="B4P4K8"/>
<dbReference type="UniPathway" id="UPA00143"/>
<dbReference type="Proteomes" id="UP000002282">
    <property type="component" value="Chromosome 2R"/>
</dbReference>
<dbReference type="GO" id="GO:0005938">
    <property type="term" value="C:cell cortex"/>
    <property type="evidence" value="ECO:0007669"/>
    <property type="project" value="EnsemblMetazoa"/>
</dbReference>
<dbReference type="GO" id="GO:0031594">
    <property type="term" value="C:neuromuscular junction"/>
    <property type="evidence" value="ECO:0000250"/>
    <property type="project" value="UniProtKB"/>
</dbReference>
<dbReference type="GO" id="GO:0005634">
    <property type="term" value="C:nucleus"/>
    <property type="evidence" value="ECO:0007669"/>
    <property type="project" value="EnsemblMetazoa"/>
</dbReference>
<dbReference type="GO" id="GO:0045495">
    <property type="term" value="C:pole plasm"/>
    <property type="evidence" value="ECO:0007669"/>
    <property type="project" value="EnsemblMetazoa"/>
</dbReference>
<dbReference type="GO" id="GO:0019005">
    <property type="term" value="C:SCF ubiquitin ligase complex"/>
    <property type="evidence" value="ECO:0007669"/>
    <property type="project" value="EnsemblMetazoa"/>
</dbReference>
<dbReference type="GO" id="GO:0010629">
    <property type="term" value="P:negative regulation of gene expression"/>
    <property type="evidence" value="ECO:0007669"/>
    <property type="project" value="EnsemblMetazoa"/>
</dbReference>
<dbReference type="GO" id="GO:0045886">
    <property type="term" value="P:negative regulation of synaptic assembly at neuromuscular junction"/>
    <property type="evidence" value="ECO:0000250"/>
    <property type="project" value="UniProtKB"/>
</dbReference>
<dbReference type="GO" id="GO:0007274">
    <property type="term" value="P:neuromuscular synaptic transmission"/>
    <property type="evidence" value="ECO:0000250"/>
    <property type="project" value="UniProtKB"/>
</dbReference>
<dbReference type="GO" id="GO:0045732">
    <property type="term" value="P:positive regulation of protein catabolic process"/>
    <property type="evidence" value="ECO:0007669"/>
    <property type="project" value="EnsemblMetazoa"/>
</dbReference>
<dbReference type="GO" id="GO:0043161">
    <property type="term" value="P:proteasome-mediated ubiquitin-dependent protein catabolic process"/>
    <property type="evidence" value="ECO:0007669"/>
    <property type="project" value="TreeGrafter"/>
</dbReference>
<dbReference type="GO" id="GO:0016567">
    <property type="term" value="P:protein ubiquitination"/>
    <property type="evidence" value="ECO:0007669"/>
    <property type="project" value="UniProtKB-UniPathway"/>
</dbReference>
<dbReference type="GO" id="GO:0060386">
    <property type="term" value="P:synapse assembly involved in innervation"/>
    <property type="evidence" value="ECO:0007669"/>
    <property type="project" value="TreeGrafter"/>
</dbReference>
<dbReference type="CDD" id="cd22111">
    <property type="entry name" value="F-box_FBXO45"/>
    <property type="match status" value="1"/>
</dbReference>
<dbReference type="CDD" id="cd12907">
    <property type="entry name" value="SPRY_Fbox"/>
    <property type="match status" value="1"/>
</dbReference>
<dbReference type="FunFam" id="1.20.1280.50:FF:000140">
    <property type="entry name" value="F-box/SPRY domain-containing protein 1"/>
    <property type="match status" value="1"/>
</dbReference>
<dbReference type="FunFam" id="2.60.120.920:FF:000017">
    <property type="entry name" value="F-box/SPRY domain-containing protein 1"/>
    <property type="match status" value="1"/>
</dbReference>
<dbReference type="Gene3D" id="1.20.1280.50">
    <property type="match status" value="1"/>
</dbReference>
<dbReference type="Gene3D" id="2.60.120.920">
    <property type="match status" value="1"/>
</dbReference>
<dbReference type="InterPro" id="IPR001870">
    <property type="entry name" value="B30.2/SPRY"/>
</dbReference>
<dbReference type="InterPro" id="IPR043136">
    <property type="entry name" value="B30.2/SPRY_sf"/>
</dbReference>
<dbReference type="InterPro" id="IPR013320">
    <property type="entry name" value="ConA-like_dom_sf"/>
</dbReference>
<dbReference type="InterPro" id="IPR036047">
    <property type="entry name" value="F-box-like_dom_sf"/>
</dbReference>
<dbReference type="InterPro" id="IPR001810">
    <property type="entry name" value="F-box_dom"/>
</dbReference>
<dbReference type="InterPro" id="IPR050672">
    <property type="entry name" value="FBXO45-Fsn/SPSB_families"/>
</dbReference>
<dbReference type="InterPro" id="IPR003877">
    <property type="entry name" value="SPRY_dom"/>
</dbReference>
<dbReference type="InterPro" id="IPR035784">
    <property type="entry name" value="SPRY_FBXO45"/>
</dbReference>
<dbReference type="PANTHER" id="PTHR12245:SF7">
    <property type="entry name" value="F-BOX_SPRY DOMAIN-CONTAINING PROTEIN 1"/>
    <property type="match status" value="1"/>
</dbReference>
<dbReference type="PANTHER" id="PTHR12245">
    <property type="entry name" value="SPRY DOMAIN CONTAINING SOCS BOX PROTEIN"/>
    <property type="match status" value="1"/>
</dbReference>
<dbReference type="Pfam" id="PF12937">
    <property type="entry name" value="F-box-like"/>
    <property type="match status" value="1"/>
</dbReference>
<dbReference type="Pfam" id="PF00622">
    <property type="entry name" value="SPRY"/>
    <property type="match status" value="1"/>
</dbReference>
<dbReference type="SMART" id="SM00449">
    <property type="entry name" value="SPRY"/>
    <property type="match status" value="1"/>
</dbReference>
<dbReference type="SUPFAM" id="SSF49899">
    <property type="entry name" value="Concanavalin A-like lectins/glucanases"/>
    <property type="match status" value="1"/>
</dbReference>
<dbReference type="SUPFAM" id="SSF81383">
    <property type="entry name" value="F-box domain"/>
    <property type="match status" value="1"/>
</dbReference>
<dbReference type="PROSITE" id="PS50188">
    <property type="entry name" value="B302_SPRY"/>
    <property type="match status" value="1"/>
</dbReference>
<reference evidence="6" key="1">
    <citation type="journal article" date="2007" name="Nature">
        <title>Evolution of genes and genomes on the Drosophila phylogeny.</title>
        <authorList>
            <consortium name="Drosophila 12 genomes consortium"/>
        </authorList>
    </citation>
    <scope>NUCLEOTIDE SEQUENCE [LARGE SCALE GENOMIC DNA]</scope>
    <source>
        <strain evidence="6">Tai18E2 / Tucson 14021-0261.01</strain>
    </source>
</reference>
<name>FBSP1_DROYA</name>
<evidence type="ECO:0000250" key="1"/>
<evidence type="ECO:0000250" key="2">
    <source>
        <dbReference type="UniProtKB" id="Q9V6L9"/>
    </source>
</evidence>
<evidence type="ECO:0000255" key="3"/>
<evidence type="ECO:0000255" key="4">
    <source>
        <dbReference type="PROSITE-ProRule" id="PRU00548"/>
    </source>
</evidence>
<evidence type="ECO:0000305" key="5"/>
<evidence type="ECO:0000312" key="6">
    <source>
        <dbReference type="EMBL" id="EDW90647.1"/>
    </source>
</evidence>
<accession>B4P4K8</accession>
<proteinExistence type="inferred from homology"/>